<organism>
    <name type="scientific">Saccharomyces cerevisiae (strain ATCC 204508 / S288c)</name>
    <name type="common">Baker's yeast</name>
    <dbReference type="NCBI Taxonomy" id="559292"/>
    <lineage>
        <taxon>Eukaryota</taxon>
        <taxon>Fungi</taxon>
        <taxon>Dikarya</taxon>
        <taxon>Ascomycota</taxon>
        <taxon>Saccharomycotina</taxon>
        <taxon>Saccharomycetes</taxon>
        <taxon>Saccharomycetales</taxon>
        <taxon>Saccharomycetaceae</taxon>
        <taxon>Saccharomyces</taxon>
    </lineage>
</organism>
<proteinExistence type="evidence at protein level"/>
<dbReference type="EMBL" id="U19103">
    <property type="status" value="NOT_ANNOTATED_CDS"/>
    <property type="molecule type" value="Genomic_DNA"/>
</dbReference>
<dbReference type="EMBL" id="BK006945">
    <property type="status" value="NOT_ANNOTATED_CDS"/>
    <property type="molecule type" value="Genomic_DNA"/>
</dbReference>
<dbReference type="STRING" id="4932.YLR364C-A"/>
<dbReference type="PaxDb" id="4932-YLR364C-A"/>
<dbReference type="EnsemblFungi" id="YLR364C-A_mRNA">
    <property type="protein sequence ID" value="YLR364C-A"/>
    <property type="gene ID" value="YLR364C-A"/>
</dbReference>
<dbReference type="AGR" id="SGD:S000028846"/>
<dbReference type="SGD" id="S000028846">
    <property type="gene designation" value="YLR364C-A"/>
</dbReference>
<dbReference type="HOGENOM" id="CLU_3299648_0_0_1"/>
<dbReference type="InParanoid" id="P0C5Q1"/>
<dbReference type="PRO" id="PR:P0C5Q1"/>
<dbReference type="Proteomes" id="UP000002311">
    <property type="component" value="Chromosome XII"/>
</dbReference>
<sequence>MIRVFIGSLPMLDLKNRVSSYWHFSSTPVARRITDHTCLM</sequence>
<keyword id="KW-1185">Reference proteome</keyword>
<name>YL64A_YEAST</name>
<feature type="chain" id="PRO_0000309049" description="Uncharacterized protein YLR364C-A">
    <location>
        <begin position="1"/>
        <end position="40"/>
    </location>
</feature>
<reference key="1">
    <citation type="journal article" date="1997" name="Nature">
        <title>The nucleotide sequence of Saccharomyces cerevisiae chromosome XII.</title>
        <authorList>
            <person name="Johnston M."/>
            <person name="Hillier L.W."/>
            <person name="Riles L."/>
            <person name="Albermann K."/>
            <person name="Andre B."/>
            <person name="Ansorge W."/>
            <person name="Benes V."/>
            <person name="Brueckner M."/>
            <person name="Delius H."/>
            <person name="Dubois E."/>
            <person name="Duesterhoeft A."/>
            <person name="Entian K.-D."/>
            <person name="Floeth M."/>
            <person name="Goffeau A."/>
            <person name="Hebling U."/>
            <person name="Heumann K."/>
            <person name="Heuss-Neitzel D."/>
            <person name="Hilbert H."/>
            <person name="Hilger F."/>
            <person name="Kleine K."/>
            <person name="Koetter P."/>
            <person name="Louis E.J."/>
            <person name="Messenguy F."/>
            <person name="Mewes H.-W."/>
            <person name="Miosga T."/>
            <person name="Moestl D."/>
            <person name="Mueller-Auer S."/>
            <person name="Nentwich U."/>
            <person name="Obermaier B."/>
            <person name="Piravandi E."/>
            <person name="Pohl T.M."/>
            <person name="Portetelle D."/>
            <person name="Purnelle B."/>
            <person name="Rechmann S."/>
            <person name="Rieger M."/>
            <person name="Rinke M."/>
            <person name="Rose M."/>
            <person name="Scharfe M."/>
            <person name="Scherens B."/>
            <person name="Scholler P."/>
            <person name="Schwager C."/>
            <person name="Schwarz S."/>
            <person name="Underwood A.P."/>
            <person name="Urrestarazu L.A."/>
            <person name="Vandenbol M."/>
            <person name="Verhasselt P."/>
            <person name="Vierendeels F."/>
            <person name="Voet M."/>
            <person name="Volckaert G."/>
            <person name="Voss H."/>
            <person name="Wambutt R."/>
            <person name="Wedler E."/>
            <person name="Wedler H."/>
            <person name="Zimmermann F.K."/>
            <person name="Zollner A."/>
            <person name="Hani J."/>
            <person name="Hoheisel J.D."/>
        </authorList>
    </citation>
    <scope>NUCLEOTIDE SEQUENCE [LARGE SCALE GENOMIC DNA]</scope>
    <source>
        <strain>ATCC 204508 / S288c</strain>
    </source>
</reference>
<reference key="2">
    <citation type="journal article" date="2014" name="G3 (Bethesda)">
        <title>The reference genome sequence of Saccharomyces cerevisiae: Then and now.</title>
        <authorList>
            <person name="Engel S.R."/>
            <person name="Dietrich F.S."/>
            <person name="Fisk D.G."/>
            <person name="Binkley G."/>
            <person name="Balakrishnan R."/>
            <person name="Costanzo M.C."/>
            <person name="Dwight S.S."/>
            <person name="Hitz B.C."/>
            <person name="Karra K."/>
            <person name="Nash R.S."/>
            <person name="Weng S."/>
            <person name="Wong E.D."/>
            <person name="Lloyd P."/>
            <person name="Skrzypek M.S."/>
            <person name="Miyasato S.R."/>
            <person name="Simison M."/>
            <person name="Cherry J.M."/>
        </authorList>
    </citation>
    <scope>GENOME REANNOTATION</scope>
    <source>
        <strain>ATCC 204508 / S288c</strain>
    </source>
</reference>
<reference key="3">
    <citation type="journal article" date="2002" name="Genome Res.">
        <title>Parallel identification of new genes in Saccharomyces cerevisiae.</title>
        <authorList>
            <person name="Oshiro G."/>
            <person name="Wodicka L.M."/>
            <person name="Washburn M.P."/>
            <person name="Yates J.R. III"/>
            <person name="Lockhart D.J."/>
            <person name="Winzeler E.A."/>
        </authorList>
    </citation>
    <scope>IDENTIFICATION BY MASS SPECTROMETRY</scope>
</reference>
<accession>P0C5Q1</accession>
<protein>
    <recommendedName>
        <fullName>Uncharacterized protein YLR364C-A</fullName>
    </recommendedName>
</protein>
<gene>
    <name type="ordered locus">YLR364C-A</name>
</gene>